<protein>
    <recommendedName>
        <fullName>Citrate synthase, mitochondrial</fullName>
        <ecNumber evidence="7">2.3.3.1</ecNumber>
    </recommendedName>
    <alternativeName>
        <fullName>Citrate (Si)-synthase</fullName>
    </alternativeName>
</protein>
<feature type="transit peptide" description="Mitochondrion">
    <location>
        <begin position="1"/>
        <end position="27"/>
    </location>
</feature>
<feature type="chain" id="PRO_0000005471" description="Citrate synthase, mitochondrial">
    <location>
        <begin position="28"/>
        <end position="466"/>
    </location>
</feature>
<feature type="short sequence motif" description="SIFI-degron" evidence="8">
    <location>
        <begin position="2"/>
        <end position="21"/>
    </location>
</feature>
<feature type="active site" evidence="4">
    <location>
        <position position="301"/>
    </location>
</feature>
<feature type="active site" evidence="4">
    <location>
        <position position="347"/>
    </location>
</feature>
<feature type="active site" evidence="4">
    <location>
        <position position="402"/>
    </location>
</feature>
<feature type="binding site" description="in chain A" evidence="7 10">
    <location>
        <position position="356"/>
    </location>
    <ligand>
        <name>oxaloacetate</name>
        <dbReference type="ChEBI" id="CHEBI:16452"/>
        <note>ligand shared between homodimeric partners</note>
    </ligand>
</feature>
<feature type="binding site" description="in chain A" evidence="7 10">
    <location>
        <position position="428"/>
    </location>
    <ligand>
        <name>oxaloacetate</name>
        <dbReference type="ChEBI" id="CHEBI:16452"/>
        <note>ligand shared between homodimeric partners</note>
    </ligand>
</feature>
<feature type="binding site" description="in chain B" evidence="7 10">
    <location>
        <position position="448"/>
    </location>
    <ligand>
        <name>oxaloacetate</name>
        <dbReference type="ChEBI" id="CHEBI:16452"/>
        <note>ligand shared between homodimeric partners</note>
    </ligand>
</feature>
<feature type="modified residue" description="N6-succinyllysine" evidence="3">
    <location>
        <position position="57"/>
    </location>
</feature>
<feature type="modified residue" description="N6-acetyllysine; alternate" evidence="2">
    <location>
        <position position="76"/>
    </location>
</feature>
<feature type="modified residue" description="N6-succinyllysine; alternate" evidence="2">
    <location>
        <position position="76"/>
    </location>
</feature>
<feature type="modified residue" description="N6-succinyllysine" evidence="3">
    <location>
        <position position="103"/>
    </location>
</feature>
<feature type="modified residue" description="N6-succinyllysine" evidence="3">
    <location>
        <position position="193"/>
    </location>
</feature>
<feature type="modified residue" description="N6-acetyllysine; alternate" evidence="3">
    <location>
        <position position="321"/>
    </location>
</feature>
<feature type="modified residue" description="N6-succinyllysine; alternate" evidence="3">
    <location>
        <position position="321"/>
    </location>
</feature>
<feature type="modified residue" description="N6-acetyllysine; alternate" evidence="13">
    <location>
        <position position="327"/>
    </location>
</feature>
<feature type="modified residue" description="N6-succinyllysine; alternate" evidence="3">
    <location>
        <position position="327"/>
    </location>
</feature>
<feature type="modified residue" description="N6-acetyllysine; alternate" evidence="13">
    <location>
        <position position="375"/>
    </location>
</feature>
<feature type="modified residue" description="N6-succinyllysine; alternate" evidence="3">
    <location>
        <position position="375"/>
    </location>
</feature>
<feature type="modified residue" description="N6-acetyllysine" evidence="13">
    <location>
        <position position="382"/>
    </location>
</feature>
<feature type="modified residue" description="N6-acetyllysine; alternate" evidence="13">
    <location>
        <position position="393"/>
    </location>
</feature>
<feature type="modified residue" description="N6-succinyllysine; alternate" evidence="3">
    <location>
        <position position="393"/>
    </location>
</feature>
<feature type="modified residue" description="N6,N6,N6-trimethyllysine" evidence="5 6">
    <location>
        <position position="395"/>
    </location>
</feature>
<feature type="modified residue" description="N6-succinyllysine" evidence="3">
    <location>
        <position position="450"/>
    </location>
</feature>
<feature type="modified residue" description="N6-acetyllysine; alternate" evidence="3">
    <location>
        <position position="459"/>
    </location>
</feature>
<feature type="modified residue" description="N6-succinyllysine; alternate" evidence="3">
    <location>
        <position position="459"/>
    </location>
</feature>
<feature type="mutagenesis site" description="Does not inhibit methylation." evidence="6">
    <original>K</original>
    <variation>R</variation>
    <location>
        <position position="393"/>
    </location>
</feature>
<feature type="mutagenesis site" description="Inhibits methylation." evidence="6">
    <original>K</original>
    <variation>R</variation>
    <location>
        <position position="395"/>
    </location>
</feature>
<feature type="sequence conflict" description="In Ref. 4; CAE45911." evidence="9" ref="4">
    <original>H</original>
    <variation>R</variation>
    <location>
        <position position="55"/>
    </location>
</feature>
<feature type="sequence conflict" description="In Ref. 1; AAC25560." evidence="9" ref="1">
    <original>H</original>
    <variation>C</variation>
    <location>
        <position position="127"/>
    </location>
</feature>
<feature type="sequence conflict" description="In Ref. 1; AAC25560." evidence="9" ref="1">
    <original>R</original>
    <variation>Q</variation>
    <location>
        <position position="183"/>
    </location>
</feature>
<feature type="sequence conflict" description="In Ref. 1; AAC25560." evidence="9" ref="1">
    <original>Q</original>
    <variation>R</variation>
    <location>
        <position position="187"/>
    </location>
</feature>
<feature type="sequence conflict" description="In Ref. 1; AAC25560." evidence="9" ref="1">
    <original>M</original>
    <variation>V</variation>
    <location>
        <position position="203"/>
    </location>
</feature>
<feature type="sequence conflict" description="In Ref. 1; AAC25560." evidence="9" ref="1">
    <original>R</original>
    <variation>W</variation>
    <location>
        <position position="222"/>
    </location>
</feature>
<feature type="sequence conflict" description="In Ref. 1; AAC25560." evidence="9" ref="1">
    <original>T</original>
    <variation>M</variation>
    <location>
        <position position="255"/>
    </location>
</feature>
<feature type="sequence conflict" description="In Ref. 2; AAQ13428." evidence="9" ref="2">
    <original>L</original>
    <variation>F</variation>
    <location>
        <position position="282"/>
    </location>
</feature>
<feature type="helix" evidence="15">
    <location>
        <begin position="33"/>
        <end position="55"/>
    </location>
</feature>
<feature type="strand" evidence="14">
    <location>
        <begin position="59"/>
        <end position="64"/>
    </location>
</feature>
<feature type="helix" evidence="15">
    <location>
        <begin position="65"/>
        <end position="69"/>
    </location>
</feature>
<feature type="turn" evidence="15">
    <location>
        <begin position="70"/>
        <end position="74"/>
    </location>
</feature>
<feature type="strand" evidence="14">
    <location>
        <begin position="76"/>
        <end position="79"/>
    </location>
</feature>
<feature type="strand" evidence="15">
    <location>
        <begin position="82"/>
        <end position="86"/>
    </location>
</feature>
<feature type="turn" evidence="15">
    <location>
        <begin position="87"/>
        <end position="89"/>
    </location>
</feature>
<feature type="strand" evidence="15">
    <location>
        <begin position="90"/>
        <end position="93"/>
    </location>
</feature>
<feature type="helix" evidence="15">
    <location>
        <begin position="98"/>
        <end position="104"/>
    </location>
</feature>
<feature type="helix" evidence="15">
    <location>
        <begin position="116"/>
        <end position="125"/>
    </location>
</feature>
<feature type="helix" evidence="15">
    <location>
        <begin position="131"/>
        <end position="144"/>
    </location>
</feature>
<feature type="helix" evidence="15">
    <location>
        <begin position="149"/>
        <end position="157"/>
    </location>
</feature>
<feature type="helix" evidence="15">
    <location>
        <begin position="164"/>
        <end position="174"/>
    </location>
</feature>
<feature type="helix" evidence="15">
    <location>
        <begin position="175"/>
        <end position="178"/>
    </location>
</feature>
<feature type="helix" evidence="15">
    <location>
        <begin position="180"/>
        <end position="187"/>
    </location>
</feature>
<feature type="helix" evidence="15">
    <location>
        <begin position="191"/>
        <end position="193"/>
    </location>
</feature>
<feature type="helix" evidence="15">
    <location>
        <begin position="194"/>
        <end position="221"/>
    </location>
</feature>
<feature type="helix" evidence="15">
    <location>
        <begin position="236"/>
        <end position="244"/>
    </location>
</feature>
<feature type="helix" evidence="15">
    <location>
        <begin position="249"/>
        <end position="261"/>
    </location>
</feature>
<feature type="helix" evidence="15">
    <location>
        <begin position="270"/>
        <end position="279"/>
    </location>
</feature>
<feature type="turn" evidence="15">
    <location>
        <begin position="280"/>
        <end position="282"/>
    </location>
</feature>
<feature type="helix" evidence="15">
    <location>
        <begin position="285"/>
        <end position="296"/>
    </location>
</feature>
<feature type="helix" evidence="15">
    <location>
        <begin position="299"/>
        <end position="302"/>
    </location>
</feature>
<feature type="helix" evidence="15">
    <location>
        <begin position="304"/>
        <end position="319"/>
    </location>
</feature>
<feature type="helix" evidence="15">
    <location>
        <begin position="325"/>
        <end position="337"/>
    </location>
</feature>
<feature type="strand" evidence="15">
    <location>
        <begin position="345"/>
        <end position="349"/>
    </location>
</feature>
<feature type="helix" evidence="15">
    <location>
        <begin position="355"/>
        <end position="367"/>
    </location>
</feature>
<feature type="helix" evidence="15">
    <location>
        <begin position="372"/>
        <end position="391"/>
    </location>
</feature>
<feature type="strand" evidence="15">
    <location>
        <begin position="394"/>
        <end position="399"/>
    </location>
</feature>
<feature type="helix" evidence="15">
    <location>
        <begin position="401"/>
        <end position="403"/>
    </location>
</feature>
<feature type="helix" evidence="15">
    <location>
        <begin position="405"/>
        <end position="411"/>
    </location>
</feature>
<feature type="helix" evidence="15">
    <location>
        <begin position="417"/>
        <end position="419"/>
    </location>
</feature>
<feature type="helix" evidence="15">
    <location>
        <begin position="420"/>
        <end position="441"/>
    </location>
</feature>
<feature type="strand" evidence="14">
    <location>
        <begin position="450"/>
        <end position="452"/>
    </location>
</feature>
<feature type="helix" evidence="15">
    <location>
        <begin position="454"/>
        <end position="462"/>
    </location>
</feature>
<keyword id="KW-0002">3D-structure</keyword>
<keyword id="KW-0007">Acetylation</keyword>
<keyword id="KW-0903">Direct protein sequencing</keyword>
<keyword id="KW-0488">Methylation</keyword>
<keyword id="KW-0496">Mitochondrion</keyword>
<keyword id="KW-1267">Proteomics identification</keyword>
<keyword id="KW-1185">Reference proteome</keyword>
<keyword id="KW-0808">Transferase</keyword>
<keyword id="KW-0809">Transit peptide</keyword>
<keyword id="KW-0816">Tricarboxylic acid cycle</keyword>
<keyword id="KW-0832">Ubl conjugation</keyword>
<evidence type="ECO:0000250" key="1">
    <source>
        <dbReference type="UniProtKB" id="P00889"/>
    </source>
</evidence>
<evidence type="ECO:0000250" key="2">
    <source>
        <dbReference type="UniProtKB" id="Q29RK1"/>
    </source>
</evidence>
<evidence type="ECO:0000250" key="3">
    <source>
        <dbReference type="UniProtKB" id="Q9CZU6"/>
    </source>
</evidence>
<evidence type="ECO:0000255" key="4">
    <source>
        <dbReference type="PROSITE-ProRule" id="PRU10117"/>
    </source>
</evidence>
<evidence type="ECO:0000269" key="5">
    <source>
    </source>
</evidence>
<evidence type="ECO:0000269" key="6">
    <source>
    </source>
</evidence>
<evidence type="ECO:0000269" key="7">
    <source>
    </source>
</evidence>
<evidence type="ECO:0000269" key="8">
    <source>
    </source>
</evidence>
<evidence type="ECO:0000305" key="9"/>
<evidence type="ECO:0007744" key="10">
    <source>
        <dbReference type="PDB" id="5UZP"/>
    </source>
</evidence>
<evidence type="ECO:0007744" key="11">
    <source>
        <dbReference type="PDB" id="5UZQ"/>
    </source>
</evidence>
<evidence type="ECO:0007744" key="12">
    <source>
        <dbReference type="PDB" id="5UZR"/>
    </source>
</evidence>
<evidence type="ECO:0007744" key="13">
    <source>
    </source>
</evidence>
<evidence type="ECO:0007829" key="14">
    <source>
        <dbReference type="PDB" id="5UZP"/>
    </source>
</evidence>
<evidence type="ECO:0007829" key="15">
    <source>
        <dbReference type="PDB" id="5UZQ"/>
    </source>
</evidence>
<name>CISY_HUMAN</name>
<dbReference type="EC" id="2.3.3.1" evidence="7"/>
<dbReference type="EMBL" id="AF047042">
    <property type="protein sequence ID" value="AAC25560.1"/>
    <property type="molecule type" value="mRNA"/>
</dbReference>
<dbReference type="EMBL" id="AF053631">
    <property type="protein sequence ID" value="AAQ13428.1"/>
    <property type="molecule type" value="mRNA"/>
</dbReference>
<dbReference type="EMBL" id="AK074956">
    <property type="protein sequence ID" value="BAC11314.1"/>
    <property type="molecule type" value="mRNA"/>
</dbReference>
<dbReference type="EMBL" id="BX640838">
    <property type="protein sequence ID" value="CAE45911.1"/>
    <property type="status" value="ALT_SEQ"/>
    <property type="molecule type" value="mRNA"/>
</dbReference>
<dbReference type="EMBL" id="BC000105">
    <property type="protein sequence ID" value="AAH00105.3"/>
    <property type="molecule type" value="mRNA"/>
</dbReference>
<dbReference type="EMBL" id="BC010106">
    <property type="protein sequence ID" value="AAH10106.1"/>
    <property type="molecule type" value="mRNA"/>
</dbReference>
<dbReference type="EMBL" id="BC072016">
    <property type="protein sequence ID" value="AAH72016.1"/>
    <property type="molecule type" value="mRNA"/>
</dbReference>
<dbReference type="EMBL" id="BT007414">
    <property type="protein sequence ID" value="AAP36082.1"/>
    <property type="molecule type" value="mRNA"/>
</dbReference>
<dbReference type="CCDS" id="CCDS8913.1"/>
<dbReference type="RefSeq" id="NP_004068.2">
    <property type="nucleotide sequence ID" value="NM_004077.2"/>
</dbReference>
<dbReference type="PDB" id="5UZP">
    <property type="method" value="X-ray"/>
    <property type="resolution" value="2.29 A"/>
    <property type="chains" value="A/B=28-466"/>
</dbReference>
<dbReference type="PDB" id="5UZQ">
    <property type="method" value="X-ray"/>
    <property type="resolution" value="2.16 A"/>
    <property type="chains" value="A=28-466"/>
</dbReference>
<dbReference type="PDB" id="5UZR">
    <property type="method" value="X-ray"/>
    <property type="resolution" value="2.30 A"/>
    <property type="chains" value="A/D=28-466"/>
</dbReference>
<dbReference type="PDBsum" id="5UZP"/>
<dbReference type="PDBsum" id="5UZQ"/>
<dbReference type="PDBsum" id="5UZR"/>
<dbReference type="SASBDB" id="O75390"/>
<dbReference type="SMR" id="O75390"/>
<dbReference type="BioGRID" id="107818">
    <property type="interactions" value="467"/>
</dbReference>
<dbReference type="CORUM" id="O75390"/>
<dbReference type="FunCoup" id="O75390">
    <property type="interactions" value="2230"/>
</dbReference>
<dbReference type="IntAct" id="O75390">
    <property type="interactions" value="48"/>
</dbReference>
<dbReference type="MINT" id="O75390"/>
<dbReference type="STRING" id="9606.ENSP00000342056"/>
<dbReference type="ChEMBL" id="CHEMBL4295678"/>
<dbReference type="DrugBank" id="DB03182">
    <property type="generic name" value="alpha-Fluoro-carboxymethyldethia coenzyme A complex"/>
</dbReference>
<dbReference type="DrugBank" id="DB04272">
    <property type="generic name" value="Citric acid"/>
</dbReference>
<dbReference type="DrugBank" id="DB01992">
    <property type="generic name" value="Coenzyme A"/>
</dbReference>
<dbReference type="DrugBank" id="DB03499">
    <property type="generic name" value="D-Malic acid"/>
</dbReference>
<dbReference type="DrugBank" id="DB04230">
    <property type="generic name" value="Nitromethyldethia coenzyme A"/>
</dbReference>
<dbReference type="DrugBank" id="DB02637">
    <property type="generic name" value="Oxaloacetate Ion"/>
</dbReference>
<dbReference type="DrugBank" id="DB01969">
    <property type="generic name" value="Trifluoroacetonyl coenzyme A"/>
</dbReference>
<dbReference type="CarbonylDB" id="O75390"/>
<dbReference type="GlyGen" id="O75390">
    <property type="glycosylation" value="2 sites, 1 N-linked glycan (1 site), 1 O-linked glycan (1 site)"/>
</dbReference>
<dbReference type="iPTMnet" id="O75390"/>
<dbReference type="PhosphoSitePlus" id="O75390"/>
<dbReference type="SwissPalm" id="O75390"/>
<dbReference type="BioMuta" id="CS"/>
<dbReference type="CPTAC" id="CPTAC-2721"/>
<dbReference type="CPTAC" id="CPTAC-2722"/>
<dbReference type="CPTAC" id="CPTAC-2723"/>
<dbReference type="jPOST" id="O75390"/>
<dbReference type="MassIVE" id="O75390"/>
<dbReference type="PaxDb" id="9606-ENSP00000342056"/>
<dbReference type="PeptideAtlas" id="O75390"/>
<dbReference type="PRIDE" id="O75390"/>
<dbReference type="ProteomicsDB" id="49963"/>
<dbReference type="Pumba" id="O75390"/>
<dbReference type="TopDownProteomics" id="O75390"/>
<dbReference type="Antibodypedia" id="28123">
    <property type="antibodies" value="421 antibodies from 35 providers"/>
</dbReference>
<dbReference type="DNASU" id="1431"/>
<dbReference type="Ensembl" id="ENST00000351328.8">
    <property type="protein sequence ID" value="ENSP00000342056.3"/>
    <property type="gene ID" value="ENSG00000062485.19"/>
</dbReference>
<dbReference type="GeneID" id="1431"/>
<dbReference type="KEGG" id="hsa:1431"/>
<dbReference type="MANE-Select" id="ENST00000351328.8">
    <property type="protein sequence ID" value="ENSP00000342056.3"/>
    <property type="RefSeq nucleotide sequence ID" value="NM_004077.3"/>
    <property type="RefSeq protein sequence ID" value="NP_004068.2"/>
</dbReference>
<dbReference type="UCSC" id="uc001skr.2">
    <property type="organism name" value="human"/>
</dbReference>
<dbReference type="AGR" id="HGNC:2422"/>
<dbReference type="CTD" id="1431"/>
<dbReference type="DisGeNET" id="1431"/>
<dbReference type="GeneCards" id="CS"/>
<dbReference type="HGNC" id="HGNC:2422">
    <property type="gene designation" value="CS"/>
</dbReference>
<dbReference type="HPA" id="ENSG00000062485">
    <property type="expression patterns" value="Tissue enhanced (skeletal muscle, tongue)"/>
</dbReference>
<dbReference type="MalaCards" id="CS"/>
<dbReference type="MIM" id="118950">
    <property type="type" value="gene"/>
</dbReference>
<dbReference type="neXtProt" id="NX_O75390"/>
<dbReference type="OpenTargets" id="ENSG00000062485"/>
<dbReference type="PharmGKB" id="PA26928"/>
<dbReference type="VEuPathDB" id="HostDB:ENSG00000062485"/>
<dbReference type="eggNOG" id="KOG2617">
    <property type="taxonomic scope" value="Eukaryota"/>
</dbReference>
<dbReference type="GeneTree" id="ENSGT00390000006813"/>
<dbReference type="InParanoid" id="O75390"/>
<dbReference type="OMA" id="VLEWLFK"/>
<dbReference type="OrthoDB" id="8017587at2759"/>
<dbReference type="PAN-GO" id="O75390">
    <property type="GO annotations" value="4 GO annotations based on evolutionary models"/>
</dbReference>
<dbReference type="PhylomeDB" id="O75390"/>
<dbReference type="TreeFam" id="TF300398"/>
<dbReference type="BioCyc" id="MetaCyc:ENSG00000062485-MONOMER"/>
<dbReference type="BRENDA" id="2.3.3.1">
    <property type="organism ID" value="2681"/>
</dbReference>
<dbReference type="BRENDA" id="2.3.3.16">
    <property type="organism ID" value="2681"/>
</dbReference>
<dbReference type="PathwayCommons" id="O75390"/>
<dbReference type="Reactome" id="R-HSA-1268020">
    <property type="pathway name" value="Mitochondrial protein import"/>
</dbReference>
<dbReference type="Reactome" id="R-HSA-71403">
    <property type="pathway name" value="Citric acid cycle (TCA cycle)"/>
</dbReference>
<dbReference type="Reactome" id="R-HSA-9837999">
    <property type="pathway name" value="Mitochondrial protein degradation"/>
</dbReference>
<dbReference type="Reactome" id="R-HSA-9854311">
    <property type="pathway name" value="Maturation of TCA enzymes and regulation of TCA cycle"/>
</dbReference>
<dbReference type="SignaLink" id="O75390"/>
<dbReference type="SIGNOR" id="O75390"/>
<dbReference type="UniPathway" id="UPA00223">
    <property type="reaction ID" value="UER00717"/>
</dbReference>
<dbReference type="BioGRID-ORCS" id="1431">
    <property type="hits" value="184 hits in 1173 CRISPR screens"/>
</dbReference>
<dbReference type="CD-CODE" id="91857CE7">
    <property type="entry name" value="Nucleolus"/>
</dbReference>
<dbReference type="CD-CODE" id="FB4E32DD">
    <property type="entry name" value="Presynaptic clusters and postsynaptic densities"/>
</dbReference>
<dbReference type="ChiTaRS" id="CS">
    <property type="organism name" value="human"/>
</dbReference>
<dbReference type="GenomeRNAi" id="1431"/>
<dbReference type="Pharos" id="O75390">
    <property type="development level" value="Tbio"/>
</dbReference>
<dbReference type="PRO" id="PR:O75390"/>
<dbReference type="Proteomes" id="UP000005640">
    <property type="component" value="Chromosome 12"/>
</dbReference>
<dbReference type="RNAct" id="O75390">
    <property type="molecule type" value="protein"/>
</dbReference>
<dbReference type="Bgee" id="ENSG00000062485">
    <property type="expression patterns" value="Expressed in left ventricle myocardium and 213 other cell types or tissues"/>
</dbReference>
<dbReference type="ExpressionAtlas" id="O75390">
    <property type="expression patterns" value="baseline and differential"/>
</dbReference>
<dbReference type="GO" id="GO:0070062">
    <property type="term" value="C:extracellular exosome"/>
    <property type="evidence" value="ECO:0007005"/>
    <property type="project" value="UniProtKB"/>
</dbReference>
<dbReference type="GO" id="GO:0005759">
    <property type="term" value="C:mitochondrial matrix"/>
    <property type="evidence" value="ECO:0000314"/>
    <property type="project" value="UniProtKB"/>
</dbReference>
<dbReference type="GO" id="GO:0005739">
    <property type="term" value="C:mitochondrion"/>
    <property type="evidence" value="ECO:0000314"/>
    <property type="project" value="HPA"/>
</dbReference>
<dbReference type="GO" id="GO:0005634">
    <property type="term" value="C:nucleus"/>
    <property type="evidence" value="ECO:0007005"/>
    <property type="project" value="UniProtKB"/>
</dbReference>
<dbReference type="GO" id="GO:0004108">
    <property type="term" value="F:citrate (Si)-synthase activity"/>
    <property type="evidence" value="ECO:0000314"/>
    <property type="project" value="UniProtKB"/>
</dbReference>
<dbReference type="GO" id="GO:0042802">
    <property type="term" value="F:identical protein binding"/>
    <property type="evidence" value="ECO:0000353"/>
    <property type="project" value="UniProtKB"/>
</dbReference>
<dbReference type="GO" id="GO:0003723">
    <property type="term" value="F:RNA binding"/>
    <property type="evidence" value="ECO:0007005"/>
    <property type="project" value="UniProtKB"/>
</dbReference>
<dbReference type="GO" id="GO:0005975">
    <property type="term" value="P:carbohydrate metabolic process"/>
    <property type="evidence" value="ECO:0000314"/>
    <property type="project" value="UniProtKB"/>
</dbReference>
<dbReference type="GO" id="GO:0006101">
    <property type="term" value="P:citrate metabolic process"/>
    <property type="evidence" value="ECO:0007669"/>
    <property type="project" value="InterPro"/>
</dbReference>
<dbReference type="GO" id="GO:0006099">
    <property type="term" value="P:tricarboxylic acid cycle"/>
    <property type="evidence" value="ECO:0000318"/>
    <property type="project" value="GO_Central"/>
</dbReference>
<dbReference type="CDD" id="cd06105">
    <property type="entry name" value="ScCit1-2_like"/>
    <property type="match status" value="1"/>
</dbReference>
<dbReference type="FunFam" id="1.10.230.10:FF:000001">
    <property type="entry name" value="Citrate synthase"/>
    <property type="match status" value="1"/>
</dbReference>
<dbReference type="FunFam" id="1.10.580.10:FF:000001">
    <property type="entry name" value="Citrate synthase"/>
    <property type="match status" value="1"/>
</dbReference>
<dbReference type="Gene3D" id="1.10.580.10">
    <property type="entry name" value="Citrate Synthase, domain 1"/>
    <property type="match status" value="1"/>
</dbReference>
<dbReference type="Gene3D" id="1.10.230.10">
    <property type="entry name" value="Cytochrome P450-Terp, domain 2"/>
    <property type="match status" value="1"/>
</dbReference>
<dbReference type="InterPro" id="IPR016142">
    <property type="entry name" value="Citrate_synth-like_lrg_a-sub"/>
</dbReference>
<dbReference type="InterPro" id="IPR016143">
    <property type="entry name" value="Citrate_synth-like_sm_a-sub"/>
</dbReference>
<dbReference type="InterPro" id="IPR002020">
    <property type="entry name" value="Citrate_synthase"/>
</dbReference>
<dbReference type="InterPro" id="IPR019810">
    <property type="entry name" value="Citrate_synthase_AS"/>
</dbReference>
<dbReference type="InterPro" id="IPR010109">
    <property type="entry name" value="Citrate_synthase_euk"/>
</dbReference>
<dbReference type="InterPro" id="IPR036969">
    <property type="entry name" value="Citrate_synthase_sf"/>
</dbReference>
<dbReference type="NCBIfam" id="TIGR01793">
    <property type="entry name" value="cit_synth_euk"/>
    <property type="match status" value="1"/>
</dbReference>
<dbReference type="NCBIfam" id="NF007128">
    <property type="entry name" value="PRK09569.1"/>
    <property type="match status" value="1"/>
</dbReference>
<dbReference type="PANTHER" id="PTHR11739">
    <property type="entry name" value="CITRATE SYNTHASE"/>
    <property type="match status" value="1"/>
</dbReference>
<dbReference type="PANTHER" id="PTHR11739:SF8">
    <property type="entry name" value="CITRATE SYNTHASE, MITOCHONDRIAL"/>
    <property type="match status" value="1"/>
</dbReference>
<dbReference type="Pfam" id="PF00285">
    <property type="entry name" value="Citrate_synt"/>
    <property type="match status" value="1"/>
</dbReference>
<dbReference type="PRINTS" id="PR00143">
    <property type="entry name" value="CITRTSNTHASE"/>
</dbReference>
<dbReference type="SUPFAM" id="SSF48256">
    <property type="entry name" value="Citrate synthase"/>
    <property type="match status" value="1"/>
</dbReference>
<dbReference type="PROSITE" id="PS00480">
    <property type="entry name" value="CITRATE_SYNTHASE"/>
    <property type="match status" value="1"/>
</dbReference>
<reference key="1">
    <citation type="journal article" date="1998" name="Genome">
        <title>Cloning and molecular analysis of the human citrate synthase gene.</title>
        <authorList>
            <person name="Goldenthal M.J."/>
            <person name="Marin-Garcia J."/>
            <person name="Ananthakrishnan R."/>
        </authorList>
    </citation>
    <scope>NUCLEOTIDE SEQUENCE [MRNA]</scope>
    <source>
        <tissue>Heart</tissue>
    </source>
</reference>
<reference key="2">
    <citation type="journal article" date="2000" name="Shi Yan Sheng Wu Xue Bao">
        <title>Cloning and tissue expression pattern analysis of the human citrate synthase cDNA.</title>
        <authorList>
            <person name="Liu Q."/>
            <person name="Yu L."/>
            <person name="Han X.F."/>
            <person name="Fu Q."/>
            <person name="Zhang J.X."/>
            <person name="Tang H."/>
            <person name="Zhao S.Y."/>
        </authorList>
    </citation>
    <scope>NUCLEOTIDE SEQUENCE [MRNA]</scope>
</reference>
<reference key="3">
    <citation type="journal article" date="2004" name="Nat. Genet.">
        <title>Complete sequencing and characterization of 21,243 full-length human cDNAs.</title>
        <authorList>
            <person name="Ota T."/>
            <person name="Suzuki Y."/>
            <person name="Nishikawa T."/>
            <person name="Otsuki T."/>
            <person name="Sugiyama T."/>
            <person name="Irie R."/>
            <person name="Wakamatsu A."/>
            <person name="Hayashi K."/>
            <person name="Sato H."/>
            <person name="Nagai K."/>
            <person name="Kimura K."/>
            <person name="Makita H."/>
            <person name="Sekine M."/>
            <person name="Obayashi M."/>
            <person name="Nishi T."/>
            <person name="Shibahara T."/>
            <person name="Tanaka T."/>
            <person name="Ishii S."/>
            <person name="Yamamoto J."/>
            <person name="Saito K."/>
            <person name="Kawai Y."/>
            <person name="Isono Y."/>
            <person name="Nakamura Y."/>
            <person name="Nagahari K."/>
            <person name="Murakami K."/>
            <person name="Yasuda T."/>
            <person name="Iwayanagi T."/>
            <person name="Wagatsuma M."/>
            <person name="Shiratori A."/>
            <person name="Sudo H."/>
            <person name="Hosoiri T."/>
            <person name="Kaku Y."/>
            <person name="Kodaira H."/>
            <person name="Kondo H."/>
            <person name="Sugawara M."/>
            <person name="Takahashi M."/>
            <person name="Kanda K."/>
            <person name="Yokoi T."/>
            <person name="Furuya T."/>
            <person name="Kikkawa E."/>
            <person name="Omura Y."/>
            <person name="Abe K."/>
            <person name="Kamihara K."/>
            <person name="Katsuta N."/>
            <person name="Sato K."/>
            <person name="Tanikawa M."/>
            <person name="Yamazaki M."/>
            <person name="Ninomiya K."/>
            <person name="Ishibashi T."/>
            <person name="Yamashita H."/>
            <person name="Murakawa K."/>
            <person name="Fujimori K."/>
            <person name="Tanai H."/>
            <person name="Kimata M."/>
            <person name="Watanabe M."/>
            <person name="Hiraoka S."/>
            <person name="Chiba Y."/>
            <person name="Ishida S."/>
            <person name="Ono Y."/>
            <person name="Takiguchi S."/>
            <person name="Watanabe S."/>
            <person name="Yosida M."/>
            <person name="Hotuta T."/>
            <person name="Kusano J."/>
            <person name="Kanehori K."/>
            <person name="Takahashi-Fujii A."/>
            <person name="Hara H."/>
            <person name="Tanase T.-O."/>
            <person name="Nomura Y."/>
            <person name="Togiya S."/>
            <person name="Komai F."/>
            <person name="Hara R."/>
            <person name="Takeuchi K."/>
            <person name="Arita M."/>
            <person name="Imose N."/>
            <person name="Musashino K."/>
            <person name="Yuuki H."/>
            <person name="Oshima A."/>
            <person name="Sasaki N."/>
            <person name="Aotsuka S."/>
            <person name="Yoshikawa Y."/>
            <person name="Matsunawa H."/>
            <person name="Ichihara T."/>
            <person name="Shiohata N."/>
            <person name="Sano S."/>
            <person name="Moriya S."/>
            <person name="Momiyama H."/>
            <person name="Satoh N."/>
            <person name="Takami S."/>
            <person name="Terashima Y."/>
            <person name="Suzuki O."/>
            <person name="Nakagawa S."/>
            <person name="Senoh A."/>
            <person name="Mizoguchi H."/>
            <person name="Goto Y."/>
            <person name="Shimizu F."/>
            <person name="Wakebe H."/>
            <person name="Hishigaki H."/>
            <person name="Watanabe T."/>
            <person name="Sugiyama A."/>
            <person name="Takemoto M."/>
            <person name="Kawakami B."/>
            <person name="Yamazaki M."/>
            <person name="Watanabe K."/>
            <person name="Kumagai A."/>
            <person name="Itakura S."/>
            <person name="Fukuzumi Y."/>
            <person name="Fujimori Y."/>
            <person name="Komiyama M."/>
            <person name="Tashiro H."/>
            <person name="Tanigami A."/>
            <person name="Fujiwara T."/>
            <person name="Ono T."/>
            <person name="Yamada K."/>
            <person name="Fujii Y."/>
            <person name="Ozaki K."/>
            <person name="Hirao M."/>
            <person name="Ohmori Y."/>
            <person name="Kawabata A."/>
            <person name="Hikiji T."/>
            <person name="Kobatake N."/>
            <person name="Inagaki H."/>
            <person name="Ikema Y."/>
            <person name="Okamoto S."/>
            <person name="Okitani R."/>
            <person name="Kawakami T."/>
            <person name="Noguchi S."/>
            <person name="Itoh T."/>
            <person name="Shigeta K."/>
            <person name="Senba T."/>
            <person name="Matsumura K."/>
            <person name="Nakajima Y."/>
            <person name="Mizuno T."/>
            <person name="Morinaga M."/>
            <person name="Sasaki M."/>
            <person name="Togashi T."/>
            <person name="Oyama M."/>
            <person name="Hata H."/>
            <person name="Watanabe M."/>
            <person name="Komatsu T."/>
            <person name="Mizushima-Sugano J."/>
            <person name="Satoh T."/>
            <person name="Shirai Y."/>
            <person name="Takahashi Y."/>
            <person name="Nakagawa K."/>
            <person name="Okumura K."/>
            <person name="Nagase T."/>
            <person name="Nomura N."/>
            <person name="Kikuchi H."/>
            <person name="Masuho Y."/>
            <person name="Yamashita R."/>
            <person name="Nakai K."/>
            <person name="Yada T."/>
            <person name="Nakamura Y."/>
            <person name="Ohara O."/>
            <person name="Isogai T."/>
            <person name="Sugano S."/>
        </authorList>
    </citation>
    <scope>NUCLEOTIDE SEQUENCE [LARGE SCALE MRNA]</scope>
</reference>
<reference key="4">
    <citation type="journal article" date="2007" name="BMC Genomics">
        <title>The full-ORF clone resource of the German cDNA consortium.</title>
        <authorList>
            <person name="Bechtel S."/>
            <person name="Rosenfelder H."/>
            <person name="Duda A."/>
            <person name="Schmidt C.P."/>
            <person name="Ernst U."/>
            <person name="Wellenreuther R."/>
            <person name="Mehrle A."/>
            <person name="Schuster C."/>
            <person name="Bahr A."/>
            <person name="Bloecker H."/>
            <person name="Heubner D."/>
            <person name="Hoerlein A."/>
            <person name="Michel G."/>
            <person name="Wedler H."/>
            <person name="Koehrer K."/>
            <person name="Ottenwaelder B."/>
            <person name="Poustka A."/>
            <person name="Wiemann S."/>
            <person name="Schupp I."/>
        </authorList>
    </citation>
    <scope>NUCLEOTIDE SEQUENCE [LARGE SCALE MRNA]</scope>
    <source>
        <tissue>Rectum tumor</tissue>
    </source>
</reference>
<reference key="5">
    <citation type="journal article" date="2004" name="Genome Res.">
        <title>The status, quality, and expansion of the NIH full-length cDNA project: the Mammalian Gene Collection (MGC).</title>
        <authorList>
            <consortium name="The MGC Project Team"/>
        </authorList>
    </citation>
    <scope>NUCLEOTIDE SEQUENCE [LARGE SCALE MRNA]</scope>
    <source>
        <tissue>Brain</tissue>
        <tissue>Lymph</tissue>
        <tissue>Prostate</tissue>
    </source>
</reference>
<reference key="6">
    <citation type="submission" date="2003-05" db="EMBL/GenBank/DDBJ databases">
        <title>Cloning of human full-length CDSs in BD Creator(TM) system donor vector.</title>
        <authorList>
            <person name="Kalnine N."/>
            <person name="Chen X."/>
            <person name="Rolfs A."/>
            <person name="Halleck A."/>
            <person name="Hines L."/>
            <person name="Eisenstein S."/>
            <person name="Koundinya M."/>
            <person name="Raphael J."/>
            <person name="Moreira D."/>
            <person name="Kelley T."/>
            <person name="LaBaer J."/>
            <person name="Lin Y."/>
            <person name="Phelan M."/>
            <person name="Farmer A."/>
        </authorList>
    </citation>
    <scope>NUCLEOTIDE SEQUENCE [LARGE SCALE MRNA] OF 203-466</scope>
</reference>
<reference key="7">
    <citation type="journal article" date="2004" name="Biochem. J.">
        <title>Vectorial proteomics reveal targeting, phosphorylation and specific fragmentation of polymerase I and transcript release factor (PTRF) at the surface of caveolae in human adipocytes.</title>
        <authorList>
            <person name="Aboulaich N."/>
            <person name="Vainonen J.P."/>
            <person name="Stralfors P."/>
            <person name="Vener A.V."/>
        </authorList>
    </citation>
    <scope>PROTEIN SEQUENCE OF 77-92 AND 383-393</scope>
    <source>
        <tissue>Adipocyte</tissue>
    </source>
</reference>
<reference key="8">
    <citation type="journal article" date="2009" name="Science">
        <title>Lysine acetylation targets protein complexes and co-regulates major cellular functions.</title>
        <authorList>
            <person name="Choudhary C."/>
            <person name="Kumar C."/>
            <person name="Gnad F."/>
            <person name="Nielsen M.L."/>
            <person name="Rehman M."/>
            <person name="Walther T.C."/>
            <person name="Olsen J.V."/>
            <person name="Mann M."/>
        </authorList>
    </citation>
    <scope>ACETYLATION [LARGE SCALE ANALYSIS] AT LYS-327; LYS-375; LYS-382 AND LYS-393</scope>
    <scope>IDENTIFICATION BY MASS SPECTROMETRY [LARGE SCALE ANALYSIS]</scope>
</reference>
<reference key="9">
    <citation type="journal article" date="2011" name="BMC Syst. Biol.">
        <title>Initial characterization of the human central proteome.</title>
        <authorList>
            <person name="Burkard T.R."/>
            <person name="Planyavsky M."/>
            <person name="Kaupe I."/>
            <person name="Breitwieser F.P."/>
            <person name="Buerckstuemmer T."/>
            <person name="Bennett K.L."/>
            <person name="Superti-Furga G."/>
            <person name="Colinge J."/>
        </authorList>
    </citation>
    <scope>IDENTIFICATION BY MASS SPECTROMETRY [LARGE SCALE ANALYSIS]</scope>
</reference>
<reference key="10">
    <citation type="journal article" date="2014" name="J. Proteomics">
        <title>An enzyme assisted RP-RPLC approach for in-depth analysis of human liver phosphoproteome.</title>
        <authorList>
            <person name="Bian Y."/>
            <person name="Song C."/>
            <person name="Cheng K."/>
            <person name="Dong M."/>
            <person name="Wang F."/>
            <person name="Huang J."/>
            <person name="Sun D."/>
            <person name="Wang L."/>
            <person name="Ye M."/>
            <person name="Zou H."/>
        </authorList>
    </citation>
    <scope>IDENTIFICATION BY MASS SPECTROMETRY [LARGE SCALE ANALYSIS]</scope>
    <source>
        <tissue>Liver</tissue>
    </source>
</reference>
<reference key="11">
    <citation type="journal article" date="2015" name="Proteomics">
        <title>N-terminome analysis of the human mitochondrial proteome.</title>
        <authorList>
            <person name="Vaca Jacome A.S."/>
            <person name="Rabilloud T."/>
            <person name="Schaeffer-Reiss C."/>
            <person name="Rompais M."/>
            <person name="Ayoub D."/>
            <person name="Lane L."/>
            <person name="Bairoch A."/>
            <person name="Van Dorsselaer A."/>
            <person name="Carapito C."/>
        </authorList>
    </citation>
    <scope>IDENTIFICATION BY MASS SPECTROMETRY [LARGE SCALE ANALYSIS]</scope>
</reference>
<reference key="12">
    <citation type="journal article" date="2017" name="FEBS Lett.">
        <title>Human METTL12 is a mitochondrial methyltransferase that modifies citrate synthase.</title>
        <authorList>
            <person name="Rhein V.F."/>
            <person name="Carroll J."/>
            <person name="Ding S."/>
            <person name="Fearnley I.M."/>
            <person name="Walker J.E."/>
        </authorList>
    </citation>
    <scope>METHYLATION AT LYS-395 BY CSKMT</scope>
    <scope>IDENTIFICATION BY MASS SPECTROMETRY</scope>
</reference>
<reference key="13">
    <citation type="journal article" date="2017" name="J. Biol. Chem.">
        <title>Uncovering human METTL12 as a mitochondrial methyltransferase that modulates citrate synthase activity through metabolite-sensitive lysine methylation.</title>
        <authorList>
            <person name="Malecki J."/>
            <person name="Jakobsson M.E."/>
            <person name="Ho A.Y.Y."/>
            <person name="Moen A."/>
            <person name="Rustan A.C."/>
            <person name="Falnes P.O."/>
        </authorList>
    </citation>
    <scope>METHYLATION AT LYS-395 BY CSKMT</scope>
    <scope>IDENTIFICATION BY MASS SPECTROMETRY</scope>
    <scope>MUTAGENESIS OF LYS-393 AND LYS-395</scope>
</reference>
<reference key="14">
    <citation type="journal article" date="2024" name="Nature">
        <title>Stress response silencing by an E3 ligase mutated in neurodegeneration.</title>
        <authorList>
            <person name="Haakonsen D.L."/>
            <person name="Heider M."/>
            <person name="Ingersoll A.J."/>
            <person name="Vodehnal K."/>
            <person name="Witus S.R."/>
            <person name="Uenaka T."/>
            <person name="Wernig M."/>
            <person name="Rape M."/>
        </authorList>
    </citation>
    <scope>UBIQUITINATION</scope>
</reference>
<reference evidence="10 11 12" key="15">
    <citation type="journal article" date="2019" name="Biol. Chem.">
        <title>Comparative studies of Aspergillus fumigatus 2-methylcitrate synthase and human citrate synthase.</title>
        <authorList>
            <person name="Schlachter C.R."/>
            <person name="Klapper V."/>
            <person name="Radford T."/>
            <person name="Chruszcz M."/>
        </authorList>
    </citation>
    <scope>X-RAY CRYSTALLOGRAPHY (2.16 ANGSTROMS) OF 28-466 OF WILD-TYPE AND MUTANT GLY-348 IN COMPLEX WITH OXALOACETATE</scope>
    <scope>CATALYTIC ACTIVITY</scope>
    <scope>BIOPHYSICOCHEMICAL PROPERTIES</scope>
    <scope>SUBUNIT</scope>
</reference>
<gene>
    <name type="primary">CS</name>
</gene>
<proteinExistence type="evidence at protein level"/>
<comment type="function">
    <text evidence="9">Key enzyme of the Krebs tricarboxylic acid cycle which catalyzes the synthesis of citrate from acetyl coenzyme A and oxaloacetate.</text>
</comment>
<comment type="catalytic activity">
    <reaction evidence="7">
        <text>oxaloacetate + acetyl-CoA + H2O = citrate + CoA + H(+)</text>
        <dbReference type="Rhea" id="RHEA:16845"/>
        <dbReference type="ChEBI" id="CHEBI:15377"/>
        <dbReference type="ChEBI" id="CHEBI:15378"/>
        <dbReference type="ChEBI" id="CHEBI:16452"/>
        <dbReference type="ChEBI" id="CHEBI:16947"/>
        <dbReference type="ChEBI" id="CHEBI:57287"/>
        <dbReference type="ChEBI" id="CHEBI:57288"/>
        <dbReference type="EC" id="2.3.3.1"/>
    </reaction>
</comment>
<comment type="biophysicochemical properties">
    <kinetics>
        <KM evidence="7">3.6 uM for oxaloacetate</KM>
        <KM evidence="7">7.7 uM for acetyl-coA</KM>
    </kinetics>
</comment>
<comment type="pathway">
    <text>Carbohydrate metabolism; tricarboxylic acid cycle; isocitrate from oxaloacetate: step 1/2.</text>
</comment>
<comment type="subunit">
    <text evidence="7">Homodimer.</text>
</comment>
<comment type="subcellular location">
    <subcellularLocation>
        <location evidence="1">Mitochondrion matrix</location>
    </subcellularLocation>
</comment>
<comment type="PTM">
    <text evidence="5 6">Methylated (PubMed:28391595, PubMed:28887308). Trimethylation at Lys-395 by CSKMT decreases citrate synthase activity (PubMed:28887308).</text>
</comment>
<comment type="PTM">
    <text evidence="8">In response to mitochondrial stress, the precursor protein is ubiquitinated by the SIFI complex in the cytoplasm before mitochondrial import, leading to its degradation (PubMed:38297121). Within the SIFI complex, UBR4 initiates ubiquitin chain that are further elongated or branched by KCMF1 (PubMed:38297121).</text>
</comment>
<comment type="miscellaneous">
    <text>Citrate synthase is found in nearly all cells capable of oxidative metabolism.</text>
</comment>
<comment type="similarity">
    <text evidence="9">Belongs to the citrate synthase family.</text>
</comment>
<comment type="sequence caution" evidence="9">
    <conflict type="miscellaneous discrepancy">
        <sequence resource="EMBL-CDS" id="CAE45911"/>
    </conflict>
    <text>Intron retention.</text>
</comment>
<comment type="online information" name="Wikipedia">
    <link uri="https://en.wikipedia.org/wiki/Citrate_synthase"/>
    <text>Citrate synthase entry</text>
</comment>
<sequence>MALLTAAARLLGTKNASCLVLAARHASASSTNLKDILADLIPKEQARIKTFRQQHGKTVVGQITVDMMYGGMRGMKGLVYETSVLDPDEGIRFRGFSIPECQKLLPKAKGGEEPLPEGLFWLLVTGHIPTEEQVSWLSKEWAKRAALPSHVVTMLDNFPTNLHPMSQLSAAVTALNSESNFARAYAQGISRTKYWELIYEDSMDLIAKLPCVAAKIYRNLYREGSGIGAIDSNLDWSHNFTNMLGYTDHQFTELTRLYLTIHSDHEGGNVSAHTSHLVGSALSDPYLSFAAAMNGLAGPLHGLANQEVLVWLTQLQKEVGKDVSDEKLRDYIWNTLNSGRVVPGYGHAVLRKTDPRYTCQREFALKHLPNDPMFKLVAQLYKIVPNVLLEQGKAKNPWPNVDAHSGVLLQYYGMTEMNYYTVLFGVSRALGVLAQLIWSRALGFPLERPKSMSTEGLMKFVDSKSG</sequence>
<organism>
    <name type="scientific">Homo sapiens</name>
    <name type="common">Human</name>
    <dbReference type="NCBI Taxonomy" id="9606"/>
    <lineage>
        <taxon>Eukaryota</taxon>
        <taxon>Metazoa</taxon>
        <taxon>Chordata</taxon>
        <taxon>Craniata</taxon>
        <taxon>Vertebrata</taxon>
        <taxon>Euteleostomi</taxon>
        <taxon>Mammalia</taxon>
        <taxon>Eutheria</taxon>
        <taxon>Euarchontoglires</taxon>
        <taxon>Primates</taxon>
        <taxon>Haplorrhini</taxon>
        <taxon>Catarrhini</taxon>
        <taxon>Hominidae</taxon>
        <taxon>Homo</taxon>
    </lineage>
</organism>
<accession>O75390</accession>
<accession>Q71UT9</accession>
<accession>Q7KZH0</accession>
<accession>Q96FZ8</accession>
<accession>Q9BWN8</accession>